<protein>
    <recommendedName>
        <fullName evidence="1">Large ribosomal subunit protein bL27</fullName>
    </recommendedName>
    <alternativeName>
        <fullName evidence="3">50S ribosomal protein L27</fullName>
    </alternativeName>
</protein>
<proteinExistence type="inferred from homology"/>
<keyword id="KW-0687">Ribonucleoprotein</keyword>
<keyword id="KW-0689">Ribosomal protein</keyword>
<sequence>MATKKAGGSTRNGRDSEAKRLGVKRFGGESVLAGSIIVRQRGTKFHAGNNVGMGRDHTLFATADGKVKFEVKGEKSRKYVSIVTE</sequence>
<organism>
    <name type="scientific">Haemophilus influenzae (strain PittEE)</name>
    <dbReference type="NCBI Taxonomy" id="374930"/>
    <lineage>
        <taxon>Bacteria</taxon>
        <taxon>Pseudomonadati</taxon>
        <taxon>Pseudomonadota</taxon>
        <taxon>Gammaproteobacteria</taxon>
        <taxon>Pasteurellales</taxon>
        <taxon>Pasteurellaceae</taxon>
        <taxon>Haemophilus</taxon>
    </lineage>
</organism>
<evidence type="ECO:0000255" key="1">
    <source>
        <dbReference type="HAMAP-Rule" id="MF_00539"/>
    </source>
</evidence>
<evidence type="ECO:0000256" key="2">
    <source>
        <dbReference type="SAM" id="MobiDB-lite"/>
    </source>
</evidence>
<evidence type="ECO:0000305" key="3"/>
<reference key="1">
    <citation type="journal article" date="2007" name="Genome Biol.">
        <title>Characterization and modeling of the Haemophilus influenzae core and supragenomes based on the complete genomic sequences of Rd and 12 clinical nontypeable strains.</title>
        <authorList>
            <person name="Hogg J.S."/>
            <person name="Hu F.Z."/>
            <person name="Janto B."/>
            <person name="Boissy R."/>
            <person name="Hayes J."/>
            <person name="Keefe R."/>
            <person name="Post J.C."/>
            <person name="Ehrlich G.D."/>
        </authorList>
    </citation>
    <scope>NUCLEOTIDE SEQUENCE [LARGE SCALE GENOMIC DNA]</scope>
    <source>
        <strain>PittEE</strain>
    </source>
</reference>
<name>RL27_HAEIE</name>
<accession>A5UDJ5</accession>
<comment type="similarity">
    <text evidence="1">Belongs to the bacterial ribosomal protein bL27 family.</text>
</comment>
<gene>
    <name evidence="1" type="primary">rpmA</name>
    <name type="ordered locus">CGSHiEE_07635</name>
</gene>
<feature type="chain" id="PRO_1000017491" description="Large ribosomal subunit protein bL27">
    <location>
        <begin position="1"/>
        <end position="85"/>
    </location>
</feature>
<feature type="region of interest" description="Disordered" evidence="2">
    <location>
        <begin position="1"/>
        <end position="20"/>
    </location>
</feature>
<dbReference type="EMBL" id="CP000671">
    <property type="protein sequence ID" value="ABQ98846.1"/>
    <property type="molecule type" value="Genomic_DNA"/>
</dbReference>
<dbReference type="SMR" id="A5UDJ5"/>
<dbReference type="KEGG" id="hip:CGSHiEE_07635"/>
<dbReference type="HOGENOM" id="CLU_095424_4_1_6"/>
<dbReference type="GO" id="GO:0022625">
    <property type="term" value="C:cytosolic large ribosomal subunit"/>
    <property type="evidence" value="ECO:0007669"/>
    <property type="project" value="TreeGrafter"/>
</dbReference>
<dbReference type="GO" id="GO:0003735">
    <property type="term" value="F:structural constituent of ribosome"/>
    <property type="evidence" value="ECO:0007669"/>
    <property type="project" value="InterPro"/>
</dbReference>
<dbReference type="GO" id="GO:0006412">
    <property type="term" value="P:translation"/>
    <property type="evidence" value="ECO:0007669"/>
    <property type="project" value="UniProtKB-UniRule"/>
</dbReference>
<dbReference type="FunFam" id="2.40.50.100:FF:000001">
    <property type="entry name" value="50S ribosomal protein L27"/>
    <property type="match status" value="1"/>
</dbReference>
<dbReference type="Gene3D" id="2.40.50.100">
    <property type="match status" value="1"/>
</dbReference>
<dbReference type="HAMAP" id="MF_00539">
    <property type="entry name" value="Ribosomal_bL27"/>
    <property type="match status" value="1"/>
</dbReference>
<dbReference type="InterPro" id="IPR001684">
    <property type="entry name" value="Ribosomal_bL27"/>
</dbReference>
<dbReference type="InterPro" id="IPR018261">
    <property type="entry name" value="Ribosomal_bL27_CS"/>
</dbReference>
<dbReference type="NCBIfam" id="TIGR00062">
    <property type="entry name" value="L27"/>
    <property type="match status" value="1"/>
</dbReference>
<dbReference type="PANTHER" id="PTHR15893:SF0">
    <property type="entry name" value="LARGE RIBOSOMAL SUBUNIT PROTEIN BL27M"/>
    <property type="match status" value="1"/>
</dbReference>
<dbReference type="PANTHER" id="PTHR15893">
    <property type="entry name" value="RIBOSOMAL PROTEIN L27"/>
    <property type="match status" value="1"/>
</dbReference>
<dbReference type="Pfam" id="PF01016">
    <property type="entry name" value="Ribosomal_L27"/>
    <property type="match status" value="1"/>
</dbReference>
<dbReference type="PRINTS" id="PR00063">
    <property type="entry name" value="RIBOSOMALL27"/>
</dbReference>
<dbReference type="SUPFAM" id="SSF110324">
    <property type="entry name" value="Ribosomal L27 protein-like"/>
    <property type="match status" value="1"/>
</dbReference>
<dbReference type="PROSITE" id="PS00831">
    <property type="entry name" value="RIBOSOMAL_L27"/>
    <property type="match status" value="1"/>
</dbReference>